<dbReference type="EMBL" id="X14112">
    <property type="protein sequence ID" value="CAA32295.1"/>
    <property type="molecule type" value="Genomic_DNA"/>
</dbReference>
<dbReference type="EMBL" id="DQ889502">
    <property type="protein sequence ID" value="ABI63506.1"/>
    <property type="molecule type" value="Genomic_DNA"/>
</dbReference>
<dbReference type="EMBL" id="FJ593289">
    <property type="protein sequence ID" value="ACM62268.1"/>
    <property type="molecule type" value="Genomic_DNA"/>
</dbReference>
<dbReference type="PIR" id="I30088">
    <property type="entry name" value="WMBEF5"/>
</dbReference>
<dbReference type="RefSeq" id="YP_009137120.1">
    <property type="nucleotide sequence ID" value="NC_001806.2"/>
</dbReference>
<dbReference type="GeneID" id="24271472"/>
<dbReference type="KEGG" id="vg:24271472"/>
<dbReference type="Proteomes" id="UP000009294">
    <property type="component" value="Segment"/>
</dbReference>
<dbReference type="Proteomes" id="UP000180652">
    <property type="component" value="Segment"/>
</dbReference>
<dbReference type="GO" id="GO:0016020">
    <property type="term" value="C:membrane"/>
    <property type="evidence" value="ECO:0007669"/>
    <property type="project" value="UniProtKB-KW"/>
</dbReference>
<dbReference type="GO" id="GO:0019031">
    <property type="term" value="C:viral envelope"/>
    <property type="evidence" value="ECO:0007669"/>
    <property type="project" value="UniProtKB-KW"/>
</dbReference>
<dbReference type="GO" id="GO:0055036">
    <property type="term" value="C:virion membrane"/>
    <property type="evidence" value="ECO:0007669"/>
    <property type="project" value="UniProtKB-SubCell"/>
</dbReference>
<dbReference type="InterPro" id="IPR018002">
    <property type="entry name" value="Herpes_UL45"/>
</dbReference>
<dbReference type="Pfam" id="PF05473">
    <property type="entry name" value="UL45"/>
    <property type="match status" value="1"/>
</dbReference>
<dbReference type="PIRSF" id="PIRSF003509">
    <property type="entry name" value="Herpes_UL45"/>
    <property type="match status" value="1"/>
</dbReference>
<gene>
    <name type="ORF">UL45</name>
</gene>
<reference key="1">
    <citation type="journal article" date="1988" name="J. Gen. Virol.">
        <title>The complete DNA sequence of the long unique region in the genome of herpes simplex virus type 1.</title>
        <authorList>
            <person name="McGeoch D.J."/>
            <person name="Dalrymple M.A."/>
            <person name="Davison A.J."/>
            <person name="Dolan A."/>
            <person name="Frame M.C."/>
            <person name="McNab D."/>
            <person name="Perry L.J."/>
            <person name="Scott J.E."/>
            <person name="Taylor P."/>
        </authorList>
    </citation>
    <scope>NUCLEOTIDE SEQUENCE [LARGE SCALE GENOMIC DNA]</scope>
</reference>
<reference key="2">
    <citation type="journal article" date="2007" name="Microbes Infect.">
        <title>Determination and analysis of the DNA sequence of highly attenuated herpes simplex virus type 1 mutant HF10, a potential oncolytic virus.</title>
        <authorList>
            <person name="Ushijima Y."/>
            <person name="Luo C."/>
            <person name="Goshima F."/>
            <person name="Yamauchi Y."/>
            <person name="Kimura H."/>
            <person name="Nishiyama Y."/>
        </authorList>
    </citation>
    <scope>NUCLEOTIDE SEQUENCE [LARGE SCALE GENOMIC DNA]</scope>
    <source>
        <strain>Nonneuroinvasive mutant HF10</strain>
    </source>
</reference>
<reference key="3">
    <citation type="submission" date="2008-12" db="EMBL/GenBank/DDBJ databases">
        <title>Herpes simplex virus type 1 bacterial artificial chromosome.</title>
        <authorList>
            <person name="Cunningham C."/>
            <person name="Davison A.J."/>
        </authorList>
    </citation>
    <scope>NUCLEOTIDE SEQUENCE [LARGE SCALE GENOMIC DNA]</scope>
    <source>
        <strain>17 syn+</strain>
    </source>
</reference>
<reference key="4">
    <citation type="journal article" date="1994" name="J. Virol.">
        <title>The UL45 gene product is required for herpes simplex virus type 1 glycoprotein B-induced fusion.</title>
        <authorList>
            <person name="Haanes E.J."/>
            <person name="Nelson C.M."/>
            <person name="Soule C.L."/>
            <person name="Goodman J.L."/>
        </authorList>
    </citation>
    <scope>FUNCTION</scope>
</reference>
<reference key="5">
    <citation type="journal article" date="2008" name="J. Virol.">
        <title>Comprehensive characterization of extracellular herpes simplex virus type 1 virions.</title>
        <authorList>
            <person name="Loret S."/>
            <person name="Guay G."/>
            <person name="Lippe R."/>
        </authorList>
    </citation>
    <scope>SUBCELLULAR LOCATION</scope>
    <source>
        <strain>F</strain>
    </source>
</reference>
<accession>P10229</accession>
<accession>Q09I89</accession>
<name>EV45_HHV11</name>
<proteinExistence type="inferred from homology"/>
<organism>
    <name type="scientific">Human herpesvirus 1 (strain 17)</name>
    <name type="common">HHV-1</name>
    <name type="synonym">Human herpes simplex virus 1</name>
    <dbReference type="NCBI Taxonomy" id="10299"/>
    <lineage>
        <taxon>Viruses</taxon>
        <taxon>Duplodnaviria</taxon>
        <taxon>Heunggongvirae</taxon>
        <taxon>Peploviricota</taxon>
        <taxon>Herviviricetes</taxon>
        <taxon>Herpesvirales</taxon>
        <taxon>Orthoherpesviridae</taxon>
        <taxon>Alphaherpesvirinae</taxon>
        <taxon>Simplexvirus</taxon>
        <taxon>Simplexvirus humanalpha1</taxon>
        <taxon>Human herpesvirus 1</taxon>
    </lineage>
</organism>
<protein>
    <recommendedName>
        <fullName>Envelope protein UL45</fullName>
    </recommendedName>
    <alternativeName>
        <fullName>18 kDa protein</fullName>
    </alternativeName>
</protein>
<sequence length="172" mass="18180">MPLRASEHAYRPLGPGTPPMRARLPAAAWVGVGTIIGGVVIIAALVLVPSRASWALSPCDSGWHEFNLGCISWDPTPMEHEQAVGGCSAPATLIPRAAAKQLAAVARVQSARSSGYWWVSGDGIRACLRLVDGVGGIDQFCEEPALRICYYPRSPGGFVQFVTSTRNALGLP</sequence>
<evidence type="ECO:0000250" key="1"/>
<evidence type="ECO:0000255" key="2"/>
<evidence type="ECO:0000269" key="3">
    <source>
    </source>
</evidence>
<evidence type="ECO:0000269" key="4">
    <source>
    </source>
</evidence>
<evidence type="ECO:0000305" key="5"/>
<keyword id="KW-0472">Membrane</keyword>
<keyword id="KW-1185">Reference proteome</keyword>
<keyword id="KW-0735">Signal-anchor</keyword>
<keyword id="KW-0812">Transmembrane</keyword>
<keyword id="KW-1133">Transmembrane helix</keyword>
<keyword id="KW-0261">Viral envelope protein</keyword>
<keyword id="KW-0946">Virion</keyword>
<feature type="chain" id="PRO_0000116086" description="Envelope protein UL45">
    <location>
        <begin position="1"/>
        <end position="172"/>
    </location>
</feature>
<feature type="topological domain" description="Intravirion" evidence="2">
    <location>
        <begin position="1"/>
        <end position="27"/>
    </location>
</feature>
<feature type="transmembrane region" description="Helical; Signal-anchor for type II membrane protein" evidence="2">
    <location>
        <begin position="28"/>
        <end position="48"/>
    </location>
</feature>
<feature type="topological domain" description="Virion surface" evidence="2">
    <location>
        <begin position="49"/>
        <end position="172"/>
    </location>
</feature>
<comment type="function">
    <text evidence="1 4">Important virulence factor of HSV neurotropism. Seems to be required for glycoprotein B-induced fusion. Dispensable for growth in vitro (By similarity).</text>
</comment>
<comment type="subcellular location">
    <subcellularLocation>
        <location evidence="3">Virion membrane</location>
        <topology evidence="3">Single-pass type II membrane protein</topology>
    </subcellularLocation>
    <text evidence="1">In transfected cells, it is retained within the ER.</text>
</comment>
<comment type="similarity">
    <text evidence="5">Belongs to the herpesviridae HHV-1 UL45 family.</text>
</comment>
<organismHost>
    <name type="scientific">Homo sapiens</name>
    <name type="common">Human</name>
    <dbReference type="NCBI Taxonomy" id="9606"/>
</organismHost>